<accession>P0AFG6</accession>
<accession>P07016</accession>
<organism>
    <name type="scientific">Escherichia coli (strain K12)</name>
    <dbReference type="NCBI Taxonomy" id="83333"/>
    <lineage>
        <taxon>Bacteria</taxon>
        <taxon>Pseudomonadati</taxon>
        <taxon>Pseudomonadota</taxon>
        <taxon>Gammaproteobacteria</taxon>
        <taxon>Enterobacterales</taxon>
        <taxon>Enterobacteriaceae</taxon>
        <taxon>Escherichia</taxon>
    </lineage>
</organism>
<name>ODO2_ECOLI</name>
<comment type="function">
    <text evidence="12">E2 component of the 2-oxoglutarate dehydrogenase (OGDH) complex which catalyzes the second step in the conversion of 2-oxoglutarate to succinyl-CoA and CO(2).</text>
</comment>
<comment type="catalytic activity">
    <reaction evidence="12">
        <text>N(6)-[(R)-dihydrolipoyl]-L-lysyl-[protein] + succinyl-CoA = N(6)-[(R)-S(8)-succinyldihydrolipoyl]-L-lysyl-[protein] + CoA</text>
        <dbReference type="Rhea" id="RHEA:15213"/>
        <dbReference type="Rhea" id="RHEA-COMP:10475"/>
        <dbReference type="Rhea" id="RHEA-COMP:20092"/>
        <dbReference type="ChEBI" id="CHEBI:57287"/>
        <dbReference type="ChEBI" id="CHEBI:57292"/>
        <dbReference type="ChEBI" id="CHEBI:83100"/>
        <dbReference type="ChEBI" id="CHEBI:83120"/>
        <dbReference type="EC" id="2.3.1.61"/>
    </reaction>
</comment>
<comment type="cofactor">
    <cofactor>
        <name>(R)-lipoate</name>
        <dbReference type="ChEBI" id="CHEBI:83088"/>
    </cofactor>
    <text>Binds 1 lipoyl cofactor covalently.</text>
</comment>
<comment type="pathway">
    <text>Amino-acid degradation; L-lysine degradation via saccharopine pathway; glutaryl-CoA from L-lysine: step 6/6.</text>
</comment>
<comment type="subunit">
    <text evidence="4 5 9 12">Forms a 24-polypeptide structural core with octahedral symmetry (PubMed:10739245, PubMed:9677295). Part of the 2-oxoglutarate dehydrogenase (OGDH) complex composed of E1 (2-oxoglutarate dehydrogenase), E2 (dihydrolipoamide succinyltransferase) and E3 (dihydrolipoamide dehydrogenase); the complex contains multiple copies of the three enzymatic components (E1, E2 and E3) (Probable). Interacts with SucA (via N-terminus), the E1 component of OGDH complex (PubMed:17367808).</text>
</comment>
<comment type="interaction">
    <interactant intactId="EBI-558621">
        <id>P0AFG6</id>
    </interactant>
    <interactant intactId="EBI-542856">
        <id>P0A9P0</id>
        <label>lpdA</label>
    </interactant>
    <organismsDiffer>false</organismsDiffer>
    <experiments>3</experiments>
</comment>
<comment type="interaction">
    <interactant intactId="EBI-558621">
        <id>P0AFG6</id>
    </interactant>
    <interactant intactId="EBI-543523">
        <id>P0AFG3</id>
        <label>sucA</label>
    </interactant>
    <organismsDiffer>false</organismsDiffer>
    <experiments>7</experiments>
</comment>
<comment type="interaction">
    <interactant intactId="EBI-558621">
        <id>P0AFG6</id>
    </interactant>
    <interactant intactId="EBI-558645">
        <id>P77717</id>
        <label>ybaY</label>
    </interactant>
    <organismsDiffer>false</organismsDiffer>
    <experiments>3</experiments>
</comment>
<comment type="similarity">
    <text evidence="10">Belongs to the 2-oxoacid dehydrogenase family.</text>
</comment>
<sequence>MSSVDILVPDLPESVADATVATWHKKPGDAVVRDEVLVEIETDKVVLEVPASADGILDAVLEDEGTTVTSRQILGRLREGNSAGKETSAKSEEKASTPAQRQQASLEEQNNDALSPAIRRLLAEHNLDASAIKGTGVGGRLTREDVEKHLAKAPAKESAPAAAAPAAQPALAARSEKRVPMTRLRKRVAERLLEAKNSTAMLTTFNEVNMKPIMDLRKQYGEAFEKRHGIRLGFMSFYVKAVVEALKRYPEVNASIDGDDVVYHNYFDVSMAVSTPRGLVTPVLRDVDTLGMADIEKKIKELAVKGRDGKLTVEDLTGGNFTITNGGVFGSLMSTPIINPPQSAILGMHAIKDRPMAVNGQVEILPMMYLALSYDHRLIDGRESVGFLVTIKELLEDPTRLLLDV</sequence>
<evidence type="ECO:0000255" key="1">
    <source>
        <dbReference type="PROSITE-ProRule" id="PRU01066"/>
    </source>
</evidence>
<evidence type="ECO:0000255" key="2">
    <source>
        <dbReference type="PROSITE-ProRule" id="PRU01170"/>
    </source>
</evidence>
<evidence type="ECO:0000256" key="3">
    <source>
        <dbReference type="SAM" id="MobiDB-lite"/>
    </source>
</evidence>
<evidence type="ECO:0000269" key="4">
    <source>
    </source>
</evidence>
<evidence type="ECO:0000269" key="5">
    <source>
    </source>
</evidence>
<evidence type="ECO:0000269" key="6">
    <source>
    </source>
</evidence>
<evidence type="ECO:0000269" key="7">
    <source>
    </source>
</evidence>
<evidence type="ECO:0000269" key="8">
    <source>
    </source>
</evidence>
<evidence type="ECO:0000269" key="9">
    <source>
    </source>
</evidence>
<evidence type="ECO:0000305" key="10"/>
<evidence type="ECO:0000305" key="11">
    <source>
    </source>
</evidence>
<evidence type="ECO:0000305" key="12">
    <source>
    </source>
</evidence>
<evidence type="ECO:0000305" key="13">
    <source>
    </source>
</evidence>
<evidence type="ECO:0007829" key="14">
    <source>
        <dbReference type="PDB" id="1BAL"/>
    </source>
</evidence>
<evidence type="ECO:0007829" key="15">
    <source>
        <dbReference type="PDB" id="1BBL"/>
    </source>
</evidence>
<evidence type="ECO:0007829" key="16">
    <source>
        <dbReference type="PDB" id="1PMR"/>
    </source>
</evidence>
<evidence type="ECO:0007829" key="17">
    <source>
        <dbReference type="PDB" id="1SCZ"/>
    </source>
</evidence>
<evidence type="ECO:0007829" key="18">
    <source>
        <dbReference type="PDB" id="2BTH"/>
    </source>
</evidence>
<evidence type="ECO:0007829" key="19">
    <source>
        <dbReference type="PDB" id="9DZ8"/>
    </source>
</evidence>
<keyword id="KW-0002">3D-structure</keyword>
<keyword id="KW-0007">Acetylation</keyword>
<keyword id="KW-0012">Acyltransferase</keyword>
<keyword id="KW-0903">Direct protein sequencing</keyword>
<keyword id="KW-0450">Lipoyl</keyword>
<keyword id="KW-1185">Reference proteome</keyword>
<keyword id="KW-0808">Transferase</keyword>
<keyword id="KW-0816">Tricarboxylic acid cycle</keyword>
<proteinExistence type="evidence at protein level"/>
<reference key="1">
    <citation type="journal article" date="1984" name="Eur. J. Biochem.">
        <title>Nucleotide sequence of the sucB gene encoding the dihydrolipoamide succinyltransferase of Escherichia coli K12 and homology with the corresponding acetyltransferase.</title>
        <authorList>
            <person name="Spencer M.E."/>
            <person name="Darlison M.G."/>
            <person name="Stephens P.E."/>
            <person name="Duckenfield I.K."/>
            <person name="Guest J.R."/>
        </authorList>
    </citation>
    <scope>NUCLEOTIDE SEQUENCE [GENOMIC DNA]</scope>
    <source>
        <strain>K12</strain>
    </source>
</reference>
<reference key="2">
    <citation type="journal article" date="1996" name="DNA Res.">
        <title>A 718-kb DNA sequence of the Escherichia coli K-12 genome corresponding to the 12.7-28.0 min region on the linkage map.</title>
        <authorList>
            <person name="Oshima T."/>
            <person name="Aiba H."/>
            <person name="Baba T."/>
            <person name="Fujita K."/>
            <person name="Hayashi K."/>
            <person name="Honjo A."/>
            <person name="Ikemoto K."/>
            <person name="Inada T."/>
            <person name="Itoh T."/>
            <person name="Kajihara M."/>
            <person name="Kanai K."/>
            <person name="Kashimoto K."/>
            <person name="Kimura S."/>
            <person name="Kitagawa M."/>
            <person name="Makino K."/>
            <person name="Masuda S."/>
            <person name="Miki T."/>
            <person name="Mizobuchi K."/>
            <person name="Mori H."/>
            <person name="Motomura K."/>
            <person name="Nakamura Y."/>
            <person name="Nashimoto H."/>
            <person name="Nishio Y."/>
            <person name="Saito N."/>
            <person name="Sampei G."/>
            <person name="Seki Y."/>
            <person name="Tagami H."/>
            <person name="Takemoto K."/>
            <person name="Wada C."/>
            <person name="Yamamoto Y."/>
            <person name="Yano M."/>
            <person name="Horiuchi T."/>
        </authorList>
    </citation>
    <scope>NUCLEOTIDE SEQUENCE [LARGE SCALE GENOMIC DNA]</scope>
    <source>
        <strain>K12 / W3110 / ATCC 27325 / DSM 5911</strain>
    </source>
</reference>
<reference key="3">
    <citation type="journal article" date="1997" name="Science">
        <title>The complete genome sequence of Escherichia coli K-12.</title>
        <authorList>
            <person name="Blattner F.R."/>
            <person name="Plunkett G. III"/>
            <person name="Bloch C.A."/>
            <person name="Perna N.T."/>
            <person name="Burland V."/>
            <person name="Riley M."/>
            <person name="Collado-Vides J."/>
            <person name="Glasner J.D."/>
            <person name="Rode C.K."/>
            <person name="Mayhew G.F."/>
            <person name="Gregor J."/>
            <person name="Davis N.W."/>
            <person name="Kirkpatrick H.A."/>
            <person name="Goeden M.A."/>
            <person name="Rose D.J."/>
            <person name="Mau B."/>
            <person name="Shao Y."/>
        </authorList>
    </citation>
    <scope>NUCLEOTIDE SEQUENCE [LARGE SCALE GENOMIC DNA]</scope>
    <source>
        <strain>K12 / MG1655 / ATCC 47076</strain>
    </source>
</reference>
<reference key="4">
    <citation type="journal article" date="2007" name="Genes Genet. Syst.">
        <title>A role of RnlA in the RNase LS activity from Escherichia coli.</title>
        <authorList>
            <person name="Otsuka Y."/>
            <person name="Koga M."/>
            <person name="Iwamoto A."/>
            <person name="Yonesaki T."/>
        </authorList>
    </citation>
    <scope>PROTEIN SEQUENCE OF 4-10</scope>
    <source>
        <strain>K12</strain>
    </source>
</reference>
<reference key="5">
    <citation type="journal article" date="2006" name="Mol. Syst. Biol.">
        <title>Highly accurate genome sequences of Escherichia coli K-12 strains MG1655 and W3110.</title>
        <authorList>
            <person name="Hayashi K."/>
            <person name="Morooka N."/>
            <person name="Yamamoto Y."/>
            <person name="Fujita K."/>
            <person name="Isono K."/>
            <person name="Choi S."/>
            <person name="Ohtsubo E."/>
            <person name="Baba T."/>
            <person name="Wanner B.L."/>
            <person name="Mori H."/>
            <person name="Horiuchi T."/>
        </authorList>
    </citation>
    <scope>NUCLEOTIDE SEQUENCE [LARGE SCALE GENOMIC DNA]</scope>
    <source>
        <strain>K12 / W3110 / ATCC 27325 / DSM 5911</strain>
    </source>
</reference>
<reference key="6">
    <citation type="journal article" date="1984" name="Eur. J. Biochem.">
        <title>Nucleotide sequence of the sucA gene encoding the 2-oxoglutarate dehydrogenase of Escherichia coli K12.</title>
        <authorList>
            <person name="Darlison M.G."/>
            <person name="Spencer M.E."/>
            <person name="Guest J.R."/>
        </authorList>
    </citation>
    <scope>NUCLEOTIDE SEQUENCE [GENOMIC DNA] OF 1-12</scope>
</reference>
<reference key="7">
    <citation type="journal article" date="1997" name="Electrophoresis">
        <title>Comparing the predicted and observed properties of proteins encoded in the genome of Escherichia coli K-12.</title>
        <authorList>
            <person name="Link A.J."/>
            <person name="Robison K."/>
            <person name="Church G.M."/>
        </authorList>
    </citation>
    <scope>PROTEIN SEQUENCE OF 2-13</scope>
    <source>
        <strain>K12 / EMG2</strain>
    </source>
</reference>
<reference key="8">
    <citation type="journal article" date="1997" name="Electrophoresis">
        <title>Escherichia coli proteome analysis using the gene-protein database.</title>
        <authorList>
            <person name="VanBogelen R.A."/>
            <person name="Abshire K.Z."/>
            <person name="Moldover B."/>
            <person name="Olson E.R."/>
            <person name="Neidhardt F.C."/>
        </authorList>
    </citation>
    <scope>IDENTIFICATION BY 2D-GEL</scope>
</reference>
<reference key="9">
    <citation type="journal article" date="2007" name="J. Mol. Biol.">
        <title>Crystal structure of the E1 component of the Escherichia coli 2-oxoglutarate dehydrogenase multienzyme complex.</title>
        <authorList>
            <person name="Frank R.A."/>
            <person name="Price A.J."/>
            <person name="Northrop F.D."/>
            <person name="Perham R.N."/>
            <person name="Luisi B.F."/>
        </authorList>
    </citation>
    <scope>FUNCTION</scope>
    <scope>CATALYTIC ACTIVITY</scope>
    <scope>INTERACTION WITH SUCA</scope>
</reference>
<reference key="10">
    <citation type="journal article" date="2009" name="Mol. Cell. Proteomics">
        <title>Lysine acetylation is a highly abundant and evolutionarily conserved modification in Escherichia coli.</title>
        <authorList>
            <person name="Zhang J."/>
            <person name="Sprung R."/>
            <person name="Pei J."/>
            <person name="Tan X."/>
            <person name="Kim S."/>
            <person name="Zhu H."/>
            <person name="Liu C.F."/>
            <person name="Grishin N.V."/>
            <person name="Zhao Y."/>
        </authorList>
    </citation>
    <scope>ACETYLATION [LARGE SCALE ANALYSIS] AT LYS-148</scope>
    <scope>IDENTIFICATION BY MASS SPECTROMETRY</scope>
    <source>
        <strain>K12 / JW1106</strain>
        <strain>K12 / MG1655 / ATCC 47076</strain>
    </source>
</reference>
<reference key="11">
    <citation type="journal article" date="1996" name="J. Mol. Biol.">
        <title>Three-dimensional structure of the lipoyl domain from the dihydrolipoyl succinyltransferase component of the 2-oxoglutarate dehydrogenase multienzyme complex of Escherichia coli.</title>
        <authorList>
            <person name="Ricaud P.M."/>
            <person name="Howard M.J."/>
            <person name="Roberts E.L."/>
            <person name="Broadhurst R.W."/>
            <person name="Perham R.N."/>
        </authorList>
    </citation>
    <scope>STRUCTURE BY NMR OF 1-81</scope>
    <scope>LIPOYLATION AT LYS-44</scope>
</reference>
<reference key="12">
    <citation type="journal article" date="1992" name="Biochemistry">
        <title>Three-dimensional solution structure of the E3-binding domain of the dihydrolipoamide succinyltransferase core from the 2-oxoglutarate dehydrogenase multienzyme complex of Escherichia coli.</title>
        <authorList>
            <person name="Robien M.A."/>
            <person name="Clore G.M."/>
            <person name="Omichinski J.G."/>
            <person name="Perham R.N."/>
            <person name="Appella E."/>
            <person name="Sakaguchi K."/>
            <person name="Gronenborn A.M."/>
        </authorList>
    </citation>
    <scope>STRUCTURE BY NMR OF 104-153</scope>
</reference>
<reference key="13">
    <citation type="journal article" date="1998" name="J. Mol. Biol.">
        <title>Crystal structure of the truncated cubic core component of the Escherichia coli 2-oxoglutarate dehydrogenase multienzyme complex.</title>
        <authorList>
            <person name="Knapp J.E."/>
            <person name="Mitchell D.T."/>
            <person name="Yazdi M.A."/>
            <person name="Ernst S.R."/>
            <person name="Reed L.J."/>
            <person name="Hackert M.L."/>
        </authorList>
    </citation>
    <scope>X-RAY CRYSTALLOGRAPHY (3.0 ANGSTROMS) OF 173-405</scope>
    <scope>SUBUNIT</scope>
    <scope>ACTIVE SITE</scope>
</reference>
<reference key="14">
    <citation type="journal article" date="2000" name="Protein Sci.">
        <title>Expression, purification, and structural analysis of the trimeric form of the catalytic domain of the Escherichia coli dihydrolipoamide succinyltransferase.</title>
        <authorList>
            <person name="Knapp J.E."/>
            <person name="Carroll D."/>
            <person name="Lawson J.E."/>
            <person name="Ernst S.R."/>
            <person name="Reed L.J."/>
            <person name="Hackert M.L."/>
        </authorList>
    </citation>
    <scope>X-RAY CRYSTALLOGRAPHY (3.0 ANGSTROMS) OF 173-405</scope>
    <scope>SUBUNIT</scope>
    <scope>ACTIVE SITE</scope>
</reference>
<gene>
    <name type="primary">sucB</name>
    <name type="ordered locus">b0727</name>
    <name type="ordered locus">JW0716</name>
</gene>
<feature type="initiator methionine" description="Removed" evidence="8">
    <location>
        <position position="1"/>
    </location>
</feature>
<feature type="chain" id="PRO_0000162262" description="Dihydrolipoyllysine-residue succinyltransferase component of 2-oxoglutarate dehydrogenase complex">
    <location>
        <begin position="2"/>
        <end position="405"/>
    </location>
</feature>
<feature type="domain" description="Lipoyl-binding" evidence="1">
    <location>
        <begin position="3"/>
        <end position="78"/>
    </location>
</feature>
<feature type="domain" description="Peripheral subunit-binding (PSBD)" evidence="2">
    <location>
        <begin position="113"/>
        <end position="150"/>
    </location>
</feature>
<feature type="region of interest" description="Disordered" evidence="3">
    <location>
        <begin position="75"/>
        <end position="111"/>
    </location>
</feature>
<feature type="region of interest" description="Disordered" evidence="3">
    <location>
        <begin position="153"/>
        <end position="178"/>
    </location>
</feature>
<feature type="compositionally biased region" description="Polar residues" evidence="3">
    <location>
        <begin position="97"/>
        <end position="111"/>
    </location>
</feature>
<feature type="compositionally biased region" description="Low complexity" evidence="3">
    <location>
        <begin position="153"/>
        <end position="173"/>
    </location>
</feature>
<feature type="active site" evidence="11 13">
    <location>
        <position position="376"/>
    </location>
</feature>
<feature type="active site" evidence="11 13">
    <location>
        <position position="380"/>
    </location>
</feature>
<feature type="modified residue" description="N6-lipoyllysine" evidence="1 7">
    <location>
        <position position="44"/>
    </location>
</feature>
<feature type="modified residue" description="N6-acetyllysine" evidence="6">
    <location>
        <position position="148"/>
    </location>
</feature>
<feature type="strand" evidence="16">
    <location>
        <begin position="31"/>
        <end position="34"/>
    </location>
</feature>
<feature type="strand" evidence="16">
    <location>
        <begin position="42"/>
        <end position="44"/>
    </location>
</feature>
<feature type="strand" evidence="16">
    <location>
        <begin position="70"/>
        <end position="76"/>
    </location>
</feature>
<feature type="strand" evidence="14">
    <location>
        <begin position="105"/>
        <end position="107"/>
    </location>
</feature>
<feature type="helix" evidence="14">
    <location>
        <begin position="116"/>
        <end position="118"/>
    </location>
</feature>
<feature type="helix" evidence="14">
    <location>
        <begin position="121"/>
        <end position="124"/>
    </location>
</feature>
<feature type="helix" evidence="15">
    <location>
        <begin position="129"/>
        <end position="131"/>
    </location>
</feature>
<feature type="strand" evidence="18">
    <location>
        <begin position="136"/>
        <end position="139"/>
    </location>
</feature>
<feature type="helix" evidence="14">
    <location>
        <begin position="143"/>
        <end position="146"/>
    </location>
</feature>
<feature type="turn" evidence="14">
    <location>
        <begin position="147"/>
        <end position="149"/>
    </location>
</feature>
<feature type="strand" evidence="19">
    <location>
        <begin position="177"/>
        <end position="180"/>
    </location>
</feature>
<feature type="helix" evidence="17">
    <location>
        <begin position="183"/>
        <end position="196"/>
    </location>
</feature>
<feature type="strand" evidence="17">
    <location>
        <begin position="201"/>
        <end position="209"/>
    </location>
</feature>
<feature type="helix" evidence="17">
    <location>
        <begin position="211"/>
        <end position="228"/>
    </location>
</feature>
<feature type="helix" evidence="17">
    <location>
        <begin position="235"/>
        <end position="248"/>
    </location>
</feature>
<feature type="turn" evidence="17">
    <location>
        <begin position="250"/>
        <end position="253"/>
    </location>
</feature>
<feature type="strand" evidence="17">
    <location>
        <begin position="255"/>
        <end position="257"/>
    </location>
</feature>
<feature type="strand" evidence="17">
    <location>
        <begin position="260"/>
        <end position="262"/>
    </location>
</feature>
<feature type="strand" evidence="17">
    <location>
        <begin position="269"/>
        <end position="271"/>
    </location>
</feature>
<feature type="strand" evidence="17">
    <location>
        <begin position="273"/>
        <end position="275"/>
    </location>
</feature>
<feature type="strand" evidence="17">
    <location>
        <begin position="278"/>
        <end position="280"/>
    </location>
</feature>
<feature type="helix" evidence="17">
    <location>
        <begin position="287"/>
        <end position="289"/>
    </location>
</feature>
<feature type="helix" evidence="17">
    <location>
        <begin position="292"/>
        <end position="305"/>
    </location>
</feature>
<feature type="turn" evidence="17">
    <location>
        <begin position="306"/>
        <end position="309"/>
    </location>
</feature>
<feature type="helix" evidence="17">
    <location>
        <begin position="313"/>
        <end position="316"/>
    </location>
</feature>
<feature type="strand" evidence="17">
    <location>
        <begin position="320"/>
        <end position="325"/>
    </location>
</feature>
<feature type="helix" evidence="17">
    <location>
        <begin position="326"/>
        <end position="329"/>
    </location>
</feature>
<feature type="strand" evidence="19">
    <location>
        <begin position="332"/>
        <end position="334"/>
    </location>
</feature>
<feature type="strand" evidence="17">
    <location>
        <begin position="343"/>
        <end position="358"/>
    </location>
</feature>
<feature type="strand" evidence="17">
    <location>
        <begin position="361"/>
        <end position="375"/>
    </location>
</feature>
<feature type="turn" evidence="17">
    <location>
        <begin position="376"/>
        <end position="378"/>
    </location>
</feature>
<feature type="helix" evidence="17">
    <location>
        <begin position="381"/>
        <end position="396"/>
    </location>
</feature>
<feature type="helix" evidence="17">
    <location>
        <begin position="400"/>
        <end position="403"/>
    </location>
</feature>
<protein>
    <recommendedName>
        <fullName>Dihydrolipoyllysine-residue succinyltransferase component of 2-oxoglutarate dehydrogenase complex</fullName>
        <ecNumber evidence="12">2.3.1.61</ecNumber>
    </recommendedName>
    <alternativeName>
        <fullName>2-oxoglutarate dehydrogenase complex component E2</fullName>
        <shortName>OGDC-E2</shortName>
    </alternativeName>
    <alternativeName>
        <fullName>Dihydrolipoamide succinyltransferase component of 2-oxoglutarate dehydrogenase complex</fullName>
    </alternativeName>
</protein>
<dbReference type="EC" id="2.3.1.61" evidence="12"/>
<dbReference type="EMBL" id="J01619">
    <property type="protein sequence ID" value="AAA23898.1"/>
    <property type="molecule type" value="Genomic_DNA"/>
</dbReference>
<dbReference type="EMBL" id="X00664">
    <property type="protein sequence ID" value="CAA25284.1"/>
    <property type="molecule type" value="Genomic_DNA"/>
</dbReference>
<dbReference type="EMBL" id="U00096">
    <property type="protein sequence ID" value="AAC73821.1"/>
    <property type="molecule type" value="Genomic_DNA"/>
</dbReference>
<dbReference type="EMBL" id="AP009048">
    <property type="protein sequence ID" value="BAA35393.1"/>
    <property type="molecule type" value="Genomic_DNA"/>
</dbReference>
<dbReference type="EMBL" id="X00661">
    <property type="protein sequence ID" value="CAA25281.1"/>
    <property type="molecule type" value="Genomic_DNA"/>
</dbReference>
<dbReference type="PIR" id="F64808">
    <property type="entry name" value="XUECSD"/>
</dbReference>
<dbReference type="RefSeq" id="NP_415255.1">
    <property type="nucleotide sequence ID" value="NC_000913.3"/>
</dbReference>
<dbReference type="PDB" id="1BAL">
    <property type="method" value="NMR"/>
    <property type="chains" value="A=104-153"/>
</dbReference>
<dbReference type="PDB" id="1BBL">
    <property type="method" value="NMR"/>
    <property type="chains" value="A=104-153"/>
</dbReference>
<dbReference type="PDB" id="1C4T">
    <property type="method" value="X-ray"/>
    <property type="resolution" value="3.00 A"/>
    <property type="chains" value="A/B/C=173-405"/>
</dbReference>
<dbReference type="PDB" id="1E2O">
    <property type="method" value="X-ray"/>
    <property type="resolution" value="3.00 A"/>
    <property type="chains" value="A=173-405"/>
</dbReference>
<dbReference type="PDB" id="1PMR">
    <property type="method" value="NMR"/>
    <property type="chains" value="A=2-81"/>
</dbReference>
<dbReference type="PDB" id="1SCZ">
    <property type="method" value="X-ray"/>
    <property type="resolution" value="2.20 A"/>
    <property type="chains" value="A=173-405"/>
</dbReference>
<dbReference type="PDB" id="1W4H">
    <property type="method" value="NMR"/>
    <property type="chains" value="A=109-153"/>
</dbReference>
<dbReference type="PDB" id="2BTG">
    <property type="method" value="NMR"/>
    <property type="chains" value="A=109-153"/>
</dbReference>
<dbReference type="PDB" id="2BTH">
    <property type="method" value="NMR"/>
    <property type="chains" value="A=109-153"/>
</dbReference>
<dbReference type="PDB" id="2WXC">
    <property type="method" value="NMR"/>
    <property type="chains" value="A=109-153"/>
</dbReference>
<dbReference type="PDB" id="6PBR">
    <property type="method" value="X-ray"/>
    <property type="resolution" value="3.00 A"/>
    <property type="chains" value="A/B/C/D/E/F=173-405"/>
</dbReference>
<dbReference type="PDB" id="9DZ8">
    <property type="method" value="EM"/>
    <property type="resolution" value="2.51 A"/>
    <property type="chains" value="A/B/C/D/E/F/G/H/I/J/K/L/M/N/O/P/Q/R/S/T/U/V/W/X=173-405"/>
</dbReference>
<dbReference type="PDBsum" id="1BAL"/>
<dbReference type="PDBsum" id="1BBL"/>
<dbReference type="PDBsum" id="1C4T"/>
<dbReference type="PDBsum" id="1E2O"/>
<dbReference type="PDBsum" id="1PMR"/>
<dbReference type="PDBsum" id="1SCZ"/>
<dbReference type="PDBsum" id="1W4H"/>
<dbReference type="PDBsum" id="2BTG"/>
<dbReference type="PDBsum" id="2BTH"/>
<dbReference type="PDBsum" id="2WXC"/>
<dbReference type="PDBsum" id="6PBR"/>
<dbReference type="PDBsum" id="9DZ8"/>
<dbReference type="BMRB" id="P0AFG6"/>
<dbReference type="SASBDB" id="P0AFG6"/>
<dbReference type="SMR" id="P0AFG6"/>
<dbReference type="BioGRID" id="4259945">
    <property type="interactions" value="57"/>
</dbReference>
<dbReference type="BioGRID" id="849684">
    <property type="interactions" value="4"/>
</dbReference>
<dbReference type="ComplexPortal" id="CPX-3921">
    <property type="entry name" value="2-oxoglutarate dehydrogenase complex"/>
</dbReference>
<dbReference type="DIP" id="DIP-35787N"/>
<dbReference type="FunCoup" id="P0AFG6">
    <property type="interactions" value="919"/>
</dbReference>
<dbReference type="IntAct" id="P0AFG6">
    <property type="interactions" value="39"/>
</dbReference>
<dbReference type="STRING" id="511145.b0727"/>
<dbReference type="iPTMnet" id="P0AFG6"/>
<dbReference type="jPOST" id="P0AFG6"/>
<dbReference type="PaxDb" id="511145-b0727"/>
<dbReference type="EnsemblBacteria" id="AAC73821">
    <property type="protein sequence ID" value="AAC73821"/>
    <property type="gene ID" value="b0727"/>
</dbReference>
<dbReference type="GeneID" id="945307"/>
<dbReference type="KEGG" id="ecj:JW0716"/>
<dbReference type="KEGG" id="eco:b0727"/>
<dbReference type="KEGG" id="ecoc:C3026_03640"/>
<dbReference type="PATRIC" id="fig|1411691.4.peg.1546"/>
<dbReference type="EchoBASE" id="EB0973"/>
<dbReference type="eggNOG" id="COG0508">
    <property type="taxonomic scope" value="Bacteria"/>
</dbReference>
<dbReference type="HOGENOM" id="CLU_016733_0_0_6"/>
<dbReference type="InParanoid" id="P0AFG6"/>
<dbReference type="OMA" id="NMPQTAV"/>
<dbReference type="OrthoDB" id="9805770at2"/>
<dbReference type="PhylomeDB" id="P0AFG6"/>
<dbReference type="BioCyc" id="EcoCyc:E2O-MONOMER"/>
<dbReference type="BioCyc" id="MetaCyc:E2O-MONOMER"/>
<dbReference type="BRENDA" id="1.2.1.105">
    <property type="organism ID" value="2026"/>
</dbReference>
<dbReference type="BRENDA" id="2.3.1.61">
    <property type="organism ID" value="2026"/>
</dbReference>
<dbReference type="SABIO-RK" id="P0AFG6"/>
<dbReference type="UniPathway" id="UPA00868">
    <property type="reaction ID" value="UER00840"/>
</dbReference>
<dbReference type="EvolutionaryTrace" id="P0AFG6"/>
<dbReference type="PRO" id="PR:P0AFG6"/>
<dbReference type="Proteomes" id="UP000000625">
    <property type="component" value="Chromosome"/>
</dbReference>
<dbReference type="GO" id="GO:0005737">
    <property type="term" value="C:cytoplasm"/>
    <property type="evidence" value="ECO:0000314"/>
    <property type="project" value="ComplexPortal"/>
</dbReference>
<dbReference type="GO" id="GO:0005829">
    <property type="term" value="C:cytosol"/>
    <property type="evidence" value="ECO:0000314"/>
    <property type="project" value="EcoCyc"/>
</dbReference>
<dbReference type="GO" id="GO:0045252">
    <property type="term" value="C:oxoglutarate dehydrogenase complex"/>
    <property type="evidence" value="ECO:0000314"/>
    <property type="project" value="EcoliWiki"/>
</dbReference>
<dbReference type="GO" id="GO:0004149">
    <property type="term" value="F:dihydrolipoyllysine-residue succinyltransferase activity"/>
    <property type="evidence" value="ECO:0000314"/>
    <property type="project" value="EcoliWiki"/>
</dbReference>
<dbReference type="GO" id="GO:0031405">
    <property type="term" value="F:lipoic acid binding"/>
    <property type="evidence" value="ECO:0000314"/>
    <property type="project" value="EcoliWiki"/>
</dbReference>
<dbReference type="GO" id="GO:0033512">
    <property type="term" value="P:L-lysine catabolic process to acetyl-CoA via saccharopine"/>
    <property type="evidence" value="ECO:0007669"/>
    <property type="project" value="UniProtKB-UniPathway"/>
</dbReference>
<dbReference type="GO" id="GO:0006099">
    <property type="term" value="P:tricarboxylic acid cycle"/>
    <property type="evidence" value="ECO:0000314"/>
    <property type="project" value="ComplexPortal"/>
</dbReference>
<dbReference type="CDD" id="cd06849">
    <property type="entry name" value="lipoyl_domain"/>
    <property type="match status" value="1"/>
</dbReference>
<dbReference type="FunFam" id="2.40.50.100:FF:000015">
    <property type="entry name" value="Dihydrolipoyllysine-residue succinyltransferase component of 2-oxoglutarate dehydrogenase complex"/>
    <property type="match status" value="1"/>
</dbReference>
<dbReference type="FunFam" id="3.30.559.10:FF:000005">
    <property type="entry name" value="Dihydrolipoyllysine-residue succinyltransferase component of 2-oxoglutarate dehydrogenase complex"/>
    <property type="match status" value="1"/>
</dbReference>
<dbReference type="FunFam" id="4.10.320.10:FF:000001">
    <property type="entry name" value="Dihydrolipoyllysine-residue succinyltransferase component of 2-oxoglutarate dehydrogenase complex"/>
    <property type="match status" value="1"/>
</dbReference>
<dbReference type="Gene3D" id="2.40.50.100">
    <property type="match status" value="1"/>
</dbReference>
<dbReference type="Gene3D" id="3.30.559.10">
    <property type="entry name" value="Chloramphenicol acetyltransferase-like domain"/>
    <property type="match status" value="1"/>
</dbReference>
<dbReference type="Gene3D" id="4.10.320.10">
    <property type="entry name" value="E3-binding domain"/>
    <property type="match status" value="1"/>
</dbReference>
<dbReference type="InterPro" id="IPR003016">
    <property type="entry name" value="2-oxoA_DH_lipoyl-BS"/>
</dbReference>
<dbReference type="InterPro" id="IPR050537">
    <property type="entry name" value="2-oxoacid_dehydrogenase"/>
</dbReference>
<dbReference type="InterPro" id="IPR001078">
    <property type="entry name" value="2-oxoacid_DH_actylTfrase"/>
</dbReference>
<dbReference type="InterPro" id="IPR000089">
    <property type="entry name" value="Biotin_lipoyl"/>
</dbReference>
<dbReference type="InterPro" id="IPR023213">
    <property type="entry name" value="CAT-like_dom_sf"/>
</dbReference>
<dbReference type="InterPro" id="IPR036625">
    <property type="entry name" value="E3-bd_dom_sf"/>
</dbReference>
<dbReference type="InterPro" id="IPR004167">
    <property type="entry name" value="PSBD"/>
</dbReference>
<dbReference type="InterPro" id="IPR011053">
    <property type="entry name" value="Single_hybrid_motif"/>
</dbReference>
<dbReference type="InterPro" id="IPR006255">
    <property type="entry name" value="SucB"/>
</dbReference>
<dbReference type="NCBIfam" id="NF004309">
    <property type="entry name" value="PRK05704.1"/>
    <property type="match status" value="1"/>
</dbReference>
<dbReference type="NCBIfam" id="TIGR01347">
    <property type="entry name" value="sucB"/>
    <property type="match status" value="1"/>
</dbReference>
<dbReference type="PANTHER" id="PTHR43416:SF5">
    <property type="entry name" value="DIHYDROLIPOYLLYSINE-RESIDUE SUCCINYLTRANSFERASE COMPONENT OF 2-OXOGLUTARATE DEHYDROGENASE COMPLEX, MITOCHONDRIAL"/>
    <property type="match status" value="1"/>
</dbReference>
<dbReference type="PANTHER" id="PTHR43416">
    <property type="entry name" value="DIHYDROLIPOYLLYSINE-RESIDUE SUCCINYLTRANSFERASE COMPONENT OF 2-OXOGLUTARATE DEHYDROGENASE COMPLEX, MITOCHONDRIAL-RELATED"/>
    <property type="match status" value="1"/>
</dbReference>
<dbReference type="Pfam" id="PF00198">
    <property type="entry name" value="2-oxoacid_dh"/>
    <property type="match status" value="1"/>
</dbReference>
<dbReference type="Pfam" id="PF00364">
    <property type="entry name" value="Biotin_lipoyl"/>
    <property type="match status" value="1"/>
</dbReference>
<dbReference type="Pfam" id="PF02817">
    <property type="entry name" value="E3_binding"/>
    <property type="match status" value="1"/>
</dbReference>
<dbReference type="SUPFAM" id="SSF52777">
    <property type="entry name" value="CoA-dependent acyltransferases"/>
    <property type="match status" value="1"/>
</dbReference>
<dbReference type="SUPFAM" id="SSF47005">
    <property type="entry name" value="Peripheral subunit-binding domain of 2-oxo acid dehydrogenase complex"/>
    <property type="match status" value="1"/>
</dbReference>
<dbReference type="SUPFAM" id="SSF51230">
    <property type="entry name" value="Single hybrid motif"/>
    <property type="match status" value="1"/>
</dbReference>
<dbReference type="PROSITE" id="PS50968">
    <property type="entry name" value="BIOTINYL_LIPOYL"/>
    <property type="match status" value="1"/>
</dbReference>
<dbReference type="PROSITE" id="PS00189">
    <property type="entry name" value="LIPOYL"/>
    <property type="match status" value="1"/>
</dbReference>
<dbReference type="PROSITE" id="PS51826">
    <property type="entry name" value="PSBD"/>
    <property type="match status" value="1"/>
</dbReference>